<sequence>MAGLESKVSDMKIKSDVVFYIDEASGNDETGNGSQTSPFKTAIHALETDANCTIFVKKNGSEEFEPITTNALKKAKKGVEQAAKKKAKAAEAEAAAAARAAAAKEAEAKRLEAAKNIVLKEPKDAPAAKKIAIIDSTNFRDSRVRVNGWVHRMRTQKGIIFIILRDGTGFLQCVLSGKVYDRASYDFINLGPESTVCLYGVIKELPEGKSAPGNHELVVDYYQILHAAPTGEEAFTNRLNAEAEPSYLLDQRHLVIRGETASSVLKVRARALRAMRDTFENLKMTEVTPPCMVQTQVEGGATLFKFNYYGQDAYLTQSSQLYLEAALPALGSVYTIQESFRAEKSLTRRHLSEFTHVEFELPFVNFGEFLEIIEEFICQTIDRLLDDPIATPLIKQLNPDFVKPSRPFMRLSYEDAIKYLNEHNILTPEGEQHKFGDDIAEAAERKMTDQINRPIFLTYFPLEIKSFYMKRVVDRPELTESVDCLMPNVGEIVGGSMRISDIQELLAAYKREGIDPAPYYWFTEQRKYGTTEHGGCGLGLERFLAWLCDRYTVRECCLFPRFTERCTP</sequence>
<reference key="1">
    <citation type="journal article" date="2002" name="Nature">
        <title>The genome sequence of Schizosaccharomyces pombe.</title>
        <authorList>
            <person name="Wood V."/>
            <person name="Gwilliam R."/>
            <person name="Rajandream M.A."/>
            <person name="Lyne M.H."/>
            <person name="Lyne R."/>
            <person name="Stewart A."/>
            <person name="Sgouros J.G."/>
            <person name="Peat N."/>
            <person name="Hayles J."/>
            <person name="Baker S.G."/>
            <person name="Basham D."/>
            <person name="Bowman S."/>
            <person name="Brooks K."/>
            <person name="Brown D."/>
            <person name="Brown S."/>
            <person name="Chillingworth T."/>
            <person name="Churcher C.M."/>
            <person name="Collins M."/>
            <person name="Connor R."/>
            <person name="Cronin A."/>
            <person name="Davis P."/>
            <person name="Feltwell T."/>
            <person name="Fraser A."/>
            <person name="Gentles S."/>
            <person name="Goble A."/>
            <person name="Hamlin N."/>
            <person name="Harris D.E."/>
            <person name="Hidalgo J."/>
            <person name="Hodgson G."/>
            <person name="Holroyd S."/>
            <person name="Hornsby T."/>
            <person name="Howarth S."/>
            <person name="Huckle E.J."/>
            <person name="Hunt S."/>
            <person name="Jagels K."/>
            <person name="James K.D."/>
            <person name="Jones L."/>
            <person name="Jones M."/>
            <person name="Leather S."/>
            <person name="McDonald S."/>
            <person name="McLean J."/>
            <person name="Mooney P."/>
            <person name="Moule S."/>
            <person name="Mungall K.L."/>
            <person name="Murphy L.D."/>
            <person name="Niblett D."/>
            <person name="Odell C."/>
            <person name="Oliver K."/>
            <person name="O'Neil S."/>
            <person name="Pearson D."/>
            <person name="Quail M.A."/>
            <person name="Rabbinowitsch E."/>
            <person name="Rutherford K.M."/>
            <person name="Rutter S."/>
            <person name="Saunders D."/>
            <person name="Seeger K."/>
            <person name="Sharp S."/>
            <person name="Skelton J."/>
            <person name="Simmonds M.N."/>
            <person name="Squares R."/>
            <person name="Squares S."/>
            <person name="Stevens K."/>
            <person name="Taylor K."/>
            <person name="Taylor R.G."/>
            <person name="Tivey A."/>
            <person name="Walsh S.V."/>
            <person name="Warren T."/>
            <person name="Whitehead S."/>
            <person name="Woodward J.R."/>
            <person name="Volckaert G."/>
            <person name="Aert R."/>
            <person name="Robben J."/>
            <person name="Grymonprez B."/>
            <person name="Weltjens I."/>
            <person name="Vanstreels E."/>
            <person name="Rieger M."/>
            <person name="Schaefer M."/>
            <person name="Mueller-Auer S."/>
            <person name="Gabel C."/>
            <person name="Fuchs M."/>
            <person name="Duesterhoeft A."/>
            <person name="Fritzc C."/>
            <person name="Holzer E."/>
            <person name="Moestl D."/>
            <person name="Hilbert H."/>
            <person name="Borzym K."/>
            <person name="Langer I."/>
            <person name="Beck A."/>
            <person name="Lehrach H."/>
            <person name="Reinhardt R."/>
            <person name="Pohl T.M."/>
            <person name="Eger P."/>
            <person name="Zimmermann W."/>
            <person name="Wedler H."/>
            <person name="Wambutt R."/>
            <person name="Purnelle B."/>
            <person name="Goffeau A."/>
            <person name="Cadieu E."/>
            <person name="Dreano S."/>
            <person name="Gloux S."/>
            <person name="Lelaure V."/>
            <person name="Mottier S."/>
            <person name="Galibert F."/>
            <person name="Aves S.J."/>
            <person name="Xiang Z."/>
            <person name="Hunt C."/>
            <person name="Moore K."/>
            <person name="Hurst S.M."/>
            <person name="Lucas M."/>
            <person name="Rochet M."/>
            <person name="Gaillardin C."/>
            <person name="Tallada V.A."/>
            <person name="Garzon A."/>
            <person name="Thode G."/>
            <person name="Daga R.R."/>
            <person name="Cruzado L."/>
            <person name="Jimenez J."/>
            <person name="Sanchez M."/>
            <person name="del Rey F."/>
            <person name="Benito J."/>
            <person name="Dominguez A."/>
            <person name="Revuelta J.L."/>
            <person name="Moreno S."/>
            <person name="Armstrong J."/>
            <person name="Forsburg S.L."/>
            <person name="Cerutti L."/>
            <person name="Lowe T."/>
            <person name="McCombie W.R."/>
            <person name="Paulsen I."/>
            <person name="Potashkin J."/>
            <person name="Shpakovski G.V."/>
            <person name="Ussery D."/>
            <person name="Barrell B.G."/>
            <person name="Nurse P."/>
        </authorList>
    </citation>
    <scope>NUCLEOTIDE SEQUENCE [LARGE SCALE GENOMIC DNA]</scope>
    <source>
        <strain>972 / ATCC 24843</strain>
    </source>
</reference>
<reference key="2">
    <citation type="journal article" date="2006" name="Nat. Biotechnol.">
        <title>ORFeome cloning and global analysis of protein localization in the fission yeast Schizosaccharomyces pombe.</title>
        <authorList>
            <person name="Matsuyama A."/>
            <person name="Arai R."/>
            <person name="Yashiroda Y."/>
            <person name="Shirai A."/>
            <person name="Kamata A."/>
            <person name="Sekido S."/>
            <person name="Kobayashi Y."/>
            <person name="Hashimoto A."/>
            <person name="Hamamoto M."/>
            <person name="Hiraoka Y."/>
            <person name="Horinouchi S."/>
            <person name="Yoshida M."/>
        </authorList>
    </citation>
    <scope>SUBCELLULAR LOCATION [LARGE SCALE ANALYSIS]</scope>
</reference>
<comment type="function">
    <text evidence="1">Cytosolic asparaginyl-tRNA synthetase which catalyzes the specific attachment of asparagine to its cognate tRNA.</text>
</comment>
<comment type="catalytic activity">
    <reaction>
        <text>tRNA(Asn) + L-asparagine + ATP = L-asparaginyl-tRNA(Asn) + AMP + diphosphate + H(+)</text>
        <dbReference type="Rhea" id="RHEA:11180"/>
        <dbReference type="Rhea" id="RHEA-COMP:9659"/>
        <dbReference type="Rhea" id="RHEA-COMP:9674"/>
        <dbReference type="ChEBI" id="CHEBI:15378"/>
        <dbReference type="ChEBI" id="CHEBI:30616"/>
        <dbReference type="ChEBI" id="CHEBI:33019"/>
        <dbReference type="ChEBI" id="CHEBI:58048"/>
        <dbReference type="ChEBI" id="CHEBI:78442"/>
        <dbReference type="ChEBI" id="CHEBI:78515"/>
        <dbReference type="ChEBI" id="CHEBI:456215"/>
        <dbReference type="EC" id="6.1.1.22"/>
    </reaction>
</comment>
<comment type="subcellular location">
    <subcellularLocation>
        <location evidence="2">Cytoplasm</location>
    </subcellularLocation>
</comment>
<comment type="similarity">
    <text evidence="3">Belongs to the class-II aminoacyl-tRNA synthetase family.</text>
</comment>
<proteinExistence type="inferred from homology"/>
<name>SYNC_SCHPO</name>
<accession>O94567</accession>
<dbReference type="EC" id="6.1.1.22"/>
<dbReference type="EMBL" id="CU329671">
    <property type="protein sequence ID" value="CAA21915.1"/>
    <property type="molecule type" value="Genomic_DNA"/>
</dbReference>
<dbReference type="PIR" id="T39675">
    <property type="entry name" value="T39675"/>
</dbReference>
<dbReference type="RefSeq" id="NP_595125.1">
    <property type="nucleotide sequence ID" value="NM_001021032.2"/>
</dbReference>
<dbReference type="SMR" id="O94567"/>
<dbReference type="BioGRID" id="276584">
    <property type="interactions" value="10"/>
</dbReference>
<dbReference type="FunCoup" id="O94567">
    <property type="interactions" value="687"/>
</dbReference>
<dbReference type="STRING" id="284812.O94567"/>
<dbReference type="iPTMnet" id="O94567"/>
<dbReference type="PaxDb" id="4896-SPBC1773.10c.1"/>
<dbReference type="EnsemblFungi" id="SPBC1773.10c.1">
    <property type="protein sequence ID" value="SPBC1773.10c.1:pep"/>
    <property type="gene ID" value="SPBC1773.10c"/>
</dbReference>
<dbReference type="GeneID" id="2540046"/>
<dbReference type="KEGG" id="spo:2540046"/>
<dbReference type="PomBase" id="SPBC1773.10c">
    <property type="gene designation" value="nrs1"/>
</dbReference>
<dbReference type="VEuPathDB" id="FungiDB:SPBC1773.10c"/>
<dbReference type="eggNOG" id="KOG0555">
    <property type="taxonomic scope" value="Eukaryota"/>
</dbReference>
<dbReference type="HOGENOM" id="CLU_004553_2_10_1"/>
<dbReference type="InParanoid" id="O94567"/>
<dbReference type="OMA" id="DCCLYPR"/>
<dbReference type="PhylomeDB" id="O94567"/>
<dbReference type="PRO" id="PR:O94567"/>
<dbReference type="Proteomes" id="UP000002485">
    <property type="component" value="Chromosome II"/>
</dbReference>
<dbReference type="GO" id="GO:0005737">
    <property type="term" value="C:cytoplasm"/>
    <property type="evidence" value="ECO:0000318"/>
    <property type="project" value="GO_Central"/>
</dbReference>
<dbReference type="GO" id="GO:0005829">
    <property type="term" value="C:cytosol"/>
    <property type="evidence" value="ECO:0007005"/>
    <property type="project" value="PomBase"/>
</dbReference>
<dbReference type="GO" id="GO:0004816">
    <property type="term" value="F:asparagine-tRNA ligase activity"/>
    <property type="evidence" value="ECO:0000250"/>
    <property type="project" value="PomBase"/>
</dbReference>
<dbReference type="GO" id="GO:0005524">
    <property type="term" value="F:ATP binding"/>
    <property type="evidence" value="ECO:0007669"/>
    <property type="project" value="UniProtKB-KW"/>
</dbReference>
<dbReference type="GO" id="GO:0003676">
    <property type="term" value="F:nucleic acid binding"/>
    <property type="evidence" value="ECO:0007669"/>
    <property type="project" value="InterPro"/>
</dbReference>
<dbReference type="GO" id="GO:0006421">
    <property type="term" value="P:asparaginyl-tRNA aminoacylation"/>
    <property type="evidence" value="ECO:0000315"/>
    <property type="project" value="PomBase"/>
</dbReference>
<dbReference type="GO" id="GO:0002181">
    <property type="term" value="P:cytoplasmic translation"/>
    <property type="evidence" value="ECO:0000303"/>
    <property type="project" value="PomBase"/>
</dbReference>
<dbReference type="CDD" id="cd04323">
    <property type="entry name" value="AsnRS_cyto_like_N"/>
    <property type="match status" value="1"/>
</dbReference>
<dbReference type="CDD" id="cd00776">
    <property type="entry name" value="AsxRS_core"/>
    <property type="match status" value="1"/>
</dbReference>
<dbReference type="FunFam" id="3.30.930.10:FF:000040">
    <property type="entry name" value="Asparagine--tRNA ligase, cytoplasmic"/>
    <property type="match status" value="1"/>
</dbReference>
<dbReference type="Gene3D" id="3.30.1910.20">
    <property type="entry name" value="asparaginyl-tRNA synthetase, N-terminal domain"/>
    <property type="match status" value="1"/>
</dbReference>
<dbReference type="Gene3D" id="3.30.930.10">
    <property type="entry name" value="Bira Bifunctional Protein, Domain 2"/>
    <property type="match status" value="1"/>
</dbReference>
<dbReference type="Gene3D" id="2.40.50.140">
    <property type="entry name" value="Nucleic acid-binding proteins"/>
    <property type="match status" value="1"/>
</dbReference>
<dbReference type="InterPro" id="IPR004364">
    <property type="entry name" value="Aa-tRNA-synt_II"/>
</dbReference>
<dbReference type="InterPro" id="IPR006195">
    <property type="entry name" value="aa-tRNA-synth_II"/>
</dbReference>
<dbReference type="InterPro" id="IPR045864">
    <property type="entry name" value="aa-tRNA-synth_II/BPL/LPL"/>
</dbReference>
<dbReference type="InterPro" id="IPR004522">
    <property type="entry name" value="Asn-tRNA-ligase"/>
</dbReference>
<dbReference type="InterPro" id="IPR048952">
    <property type="entry name" value="AsnRS_N"/>
</dbReference>
<dbReference type="InterPro" id="IPR002312">
    <property type="entry name" value="Asp/Asn-tRNA-synth_IIb"/>
</dbReference>
<dbReference type="InterPro" id="IPR012340">
    <property type="entry name" value="NA-bd_OB-fold"/>
</dbReference>
<dbReference type="InterPro" id="IPR004365">
    <property type="entry name" value="NA-bd_OB_tRNA"/>
</dbReference>
<dbReference type="NCBIfam" id="TIGR00457">
    <property type="entry name" value="asnS"/>
    <property type="match status" value="1"/>
</dbReference>
<dbReference type="PANTHER" id="PTHR22594:SF16">
    <property type="entry name" value="ASPARAGINE--TRNA LIGASE, CYTOPLASMIC"/>
    <property type="match status" value="1"/>
</dbReference>
<dbReference type="PANTHER" id="PTHR22594">
    <property type="entry name" value="ASPARTYL/LYSYL-TRNA SYNTHETASE"/>
    <property type="match status" value="1"/>
</dbReference>
<dbReference type="Pfam" id="PF20917">
    <property type="entry name" value="AsnRS_N"/>
    <property type="match status" value="1"/>
</dbReference>
<dbReference type="Pfam" id="PF00152">
    <property type="entry name" value="tRNA-synt_2"/>
    <property type="match status" value="1"/>
</dbReference>
<dbReference type="Pfam" id="PF01336">
    <property type="entry name" value="tRNA_anti-codon"/>
    <property type="match status" value="1"/>
</dbReference>
<dbReference type="PRINTS" id="PR01042">
    <property type="entry name" value="TRNASYNTHASP"/>
</dbReference>
<dbReference type="SUPFAM" id="SSF55681">
    <property type="entry name" value="Class II aaRS and biotin synthetases"/>
    <property type="match status" value="1"/>
</dbReference>
<dbReference type="SUPFAM" id="SSF50249">
    <property type="entry name" value="Nucleic acid-binding proteins"/>
    <property type="match status" value="1"/>
</dbReference>
<dbReference type="PROSITE" id="PS50862">
    <property type="entry name" value="AA_TRNA_LIGASE_II"/>
    <property type="match status" value="1"/>
</dbReference>
<feature type="chain" id="PRO_0000176499" description="Probable asparagine--tRNA ligase, cytoplasmic">
    <location>
        <begin position="1"/>
        <end position="568"/>
    </location>
</feature>
<gene>
    <name type="primary">nrs1</name>
    <name type="synonym">ded81</name>
    <name type="ORF">SPBC1773.10c</name>
</gene>
<keyword id="KW-0030">Aminoacyl-tRNA synthetase</keyword>
<keyword id="KW-0067">ATP-binding</keyword>
<keyword id="KW-0963">Cytoplasm</keyword>
<keyword id="KW-0436">Ligase</keyword>
<keyword id="KW-0547">Nucleotide-binding</keyword>
<keyword id="KW-0648">Protein biosynthesis</keyword>
<keyword id="KW-1185">Reference proteome</keyword>
<protein>
    <recommendedName>
        <fullName>Probable asparagine--tRNA ligase, cytoplasmic</fullName>
        <ecNumber>6.1.1.22</ecNumber>
    </recommendedName>
    <alternativeName>
        <fullName>Asparaginyl-tRNA synthetase</fullName>
        <shortName>AsnRS</shortName>
    </alternativeName>
</protein>
<organism>
    <name type="scientific">Schizosaccharomyces pombe (strain 972 / ATCC 24843)</name>
    <name type="common">Fission yeast</name>
    <dbReference type="NCBI Taxonomy" id="284812"/>
    <lineage>
        <taxon>Eukaryota</taxon>
        <taxon>Fungi</taxon>
        <taxon>Dikarya</taxon>
        <taxon>Ascomycota</taxon>
        <taxon>Taphrinomycotina</taxon>
        <taxon>Schizosaccharomycetes</taxon>
        <taxon>Schizosaccharomycetales</taxon>
        <taxon>Schizosaccharomycetaceae</taxon>
        <taxon>Schizosaccharomyces</taxon>
    </lineage>
</organism>
<evidence type="ECO:0000250" key="1"/>
<evidence type="ECO:0000269" key="2">
    <source>
    </source>
</evidence>
<evidence type="ECO:0000305" key="3"/>